<gene>
    <name evidence="1" type="primary">purH</name>
    <name type="ordered locus">Cj0953c</name>
</gene>
<keyword id="KW-0002">3D-structure</keyword>
<keyword id="KW-0378">Hydrolase</keyword>
<keyword id="KW-0511">Multifunctional enzyme</keyword>
<keyword id="KW-0658">Purine biosynthesis</keyword>
<keyword id="KW-1185">Reference proteome</keyword>
<keyword id="KW-0808">Transferase</keyword>
<comment type="catalytic activity">
    <reaction evidence="1">
        <text>(6R)-10-formyltetrahydrofolate + 5-amino-1-(5-phospho-beta-D-ribosyl)imidazole-4-carboxamide = 5-formamido-1-(5-phospho-D-ribosyl)imidazole-4-carboxamide + (6S)-5,6,7,8-tetrahydrofolate</text>
        <dbReference type="Rhea" id="RHEA:22192"/>
        <dbReference type="ChEBI" id="CHEBI:57453"/>
        <dbReference type="ChEBI" id="CHEBI:58467"/>
        <dbReference type="ChEBI" id="CHEBI:58475"/>
        <dbReference type="ChEBI" id="CHEBI:195366"/>
        <dbReference type="EC" id="2.1.2.3"/>
    </reaction>
</comment>
<comment type="catalytic activity">
    <reaction evidence="1">
        <text>IMP + H2O = 5-formamido-1-(5-phospho-D-ribosyl)imidazole-4-carboxamide</text>
        <dbReference type="Rhea" id="RHEA:18445"/>
        <dbReference type="ChEBI" id="CHEBI:15377"/>
        <dbReference type="ChEBI" id="CHEBI:58053"/>
        <dbReference type="ChEBI" id="CHEBI:58467"/>
        <dbReference type="EC" id="3.5.4.10"/>
    </reaction>
</comment>
<comment type="pathway">
    <text evidence="1">Purine metabolism; IMP biosynthesis via de novo pathway; 5-formamido-1-(5-phospho-D-ribosyl)imidazole-4-carboxamide from 5-amino-1-(5-phospho-D-ribosyl)imidazole-4-carboxamide (10-formyl THF route): step 1/1.</text>
</comment>
<comment type="pathway">
    <text evidence="1">Purine metabolism; IMP biosynthesis via de novo pathway; IMP from 5-formamido-1-(5-phospho-D-ribosyl)imidazole-4-carboxamide: step 1/1.</text>
</comment>
<comment type="domain">
    <text evidence="1">The IMP cyclohydrolase activity resides in the N-terminal region.</text>
</comment>
<comment type="similarity">
    <text evidence="1">Belongs to the PurH family.</text>
</comment>
<name>PUR9_CAMJE</name>
<dbReference type="EC" id="2.1.2.3" evidence="1"/>
<dbReference type="EC" id="3.5.4.10" evidence="1"/>
<dbReference type="EMBL" id="AL111168">
    <property type="protein sequence ID" value="CAL35073.1"/>
    <property type="molecule type" value="Genomic_DNA"/>
</dbReference>
<dbReference type="PIR" id="H81369">
    <property type="entry name" value="H81369"/>
</dbReference>
<dbReference type="RefSeq" id="WP_002853339.1">
    <property type="nucleotide sequence ID" value="NZ_SZUC01000001.1"/>
</dbReference>
<dbReference type="RefSeq" id="YP_002344351.1">
    <property type="nucleotide sequence ID" value="NC_002163.1"/>
</dbReference>
<dbReference type="PDB" id="4EHI">
    <property type="method" value="X-ray"/>
    <property type="resolution" value="2.28 A"/>
    <property type="chains" value="A/B=1-510"/>
</dbReference>
<dbReference type="PDBsum" id="4EHI"/>
<dbReference type="SMR" id="Q9PNY2"/>
<dbReference type="IntAct" id="Q9PNY2">
    <property type="interactions" value="1"/>
</dbReference>
<dbReference type="STRING" id="192222.Cj0953c"/>
<dbReference type="PaxDb" id="192222-Cj0953c"/>
<dbReference type="EnsemblBacteria" id="CAL35073">
    <property type="protein sequence ID" value="CAL35073"/>
    <property type="gene ID" value="Cj0953c"/>
</dbReference>
<dbReference type="GeneID" id="905247"/>
<dbReference type="KEGG" id="cje:Cj0953c"/>
<dbReference type="PATRIC" id="fig|192222.6.peg.937"/>
<dbReference type="eggNOG" id="COG0138">
    <property type="taxonomic scope" value="Bacteria"/>
</dbReference>
<dbReference type="HOGENOM" id="CLU_016316_5_2_7"/>
<dbReference type="OrthoDB" id="9802065at2"/>
<dbReference type="UniPathway" id="UPA00074">
    <property type="reaction ID" value="UER00133"/>
</dbReference>
<dbReference type="UniPathway" id="UPA00074">
    <property type="reaction ID" value="UER00135"/>
</dbReference>
<dbReference type="EvolutionaryTrace" id="Q9PNY2"/>
<dbReference type="Proteomes" id="UP000000799">
    <property type="component" value="Chromosome"/>
</dbReference>
<dbReference type="GO" id="GO:0005829">
    <property type="term" value="C:cytosol"/>
    <property type="evidence" value="ECO:0007669"/>
    <property type="project" value="TreeGrafter"/>
</dbReference>
<dbReference type="GO" id="GO:0003937">
    <property type="term" value="F:IMP cyclohydrolase activity"/>
    <property type="evidence" value="ECO:0007669"/>
    <property type="project" value="UniProtKB-UniRule"/>
</dbReference>
<dbReference type="GO" id="GO:0004643">
    <property type="term" value="F:phosphoribosylaminoimidazolecarboxamide formyltransferase activity"/>
    <property type="evidence" value="ECO:0007669"/>
    <property type="project" value="UniProtKB-UniRule"/>
</dbReference>
<dbReference type="GO" id="GO:0006189">
    <property type="term" value="P:'de novo' IMP biosynthetic process"/>
    <property type="evidence" value="ECO:0007669"/>
    <property type="project" value="UniProtKB-UniRule"/>
</dbReference>
<dbReference type="CDD" id="cd01421">
    <property type="entry name" value="IMPCH"/>
    <property type="match status" value="1"/>
</dbReference>
<dbReference type="FunFam" id="3.40.140.20:FF:000001">
    <property type="entry name" value="Bifunctional purine biosynthesis protein PurH"/>
    <property type="match status" value="1"/>
</dbReference>
<dbReference type="FunFam" id="3.40.50.1380:FF:000001">
    <property type="entry name" value="Bifunctional purine biosynthesis protein PurH"/>
    <property type="match status" value="1"/>
</dbReference>
<dbReference type="Gene3D" id="3.40.140.20">
    <property type="match status" value="2"/>
</dbReference>
<dbReference type="Gene3D" id="3.40.50.1380">
    <property type="entry name" value="Methylglyoxal synthase-like domain"/>
    <property type="match status" value="1"/>
</dbReference>
<dbReference type="HAMAP" id="MF_00139">
    <property type="entry name" value="PurH"/>
    <property type="match status" value="1"/>
</dbReference>
<dbReference type="InterPro" id="IPR024051">
    <property type="entry name" value="AICAR_Tfase_dup_dom_sf"/>
</dbReference>
<dbReference type="InterPro" id="IPR016193">
    <property type="entry name" value="Cytidine_deaminase-like"/>
</dbReference>
<dbReference type="InterPro" id="IPR011607">
    <property type="entry name" value="MGS-like_dom"/>
</dbReference>
<dbReference type="InterPro" id="IPR036914">
    <property type="entry name" value="MGS-like_dom_sf"/>
</dbReference>
<dbReference type="InterPro" id="IPR002695">
    <property type="entry name" value="PurH-like"/>
</dbReference>
<dbReference type="NCBIfam" id="NF002049">
    <property type="entry name" value="PRK00881.1"/>
    <property type="match status" value="1"/>
</dbReference>
<dbReference type="NCBIfam" id="TIGR00355">
    <property type="entry name" value="purH"/>
    <property type="match status" value="1"/>
</dbReference>
<dbReference type="PANTHER" id="PTHR11692:SF0">
    <property type="entry name" value="BIFUNCTIONAL PURINE BIOSYNTHESIS PROTEIN ATIC"/>
    <property type="match status" value="1"/>
</dbReference>
<dbReference type="PANTHER" id="PTHR11692">
    <property type="entry name" value="BIFUNCTIONAL PURINE BIOSYNTHESIS PROTEIN PURH"/>
    <property type="match status" value="1"/>
</dbReference>
<dbReference type="Pfam" id="PF01808">
    <property type="entry name" value="AICARFT_IMPCHas"/>
    <property type="match status" value="1"/>
</dbReference>
<dbReference type="Pfam" id="PF02142">
    <property type="entry name" value="MGS"/>
    <property type="match status" value="1"/>
</dbReference>
<dbReference type="PIRSF" id="PIRSF000414">
    <property type="entry name" value="AICARFT_IMPCHas"/>
    <property type="match status" value="1"/>
</dbReference>
<dbReference type="SMART" id="SM00798">
    <property type="entry name" value="AICARFT_IMPCHas"/>
    <property type="match status" value="1"/>
</dbReference>
<dbReference type="SMART" id="SM00851">
    <property type="entry name" value="MGS"/>
    <property type="match status" value="1"/>
</dbReference>
<dbReference type="SUPFAM" id="SSF53927">
    <property type="entry name" value="Cytidine deaminase-like"/>
    <property type="match status" value="1"/>
</dbReference>
<dbReference type="SUPFAM" id="SSF52335">
    <property type="entry name" value="Methylglyoxal synthase-like"/>
    <property type="match status" value="1"/>
</dbReference>
<dbReference type="PROSITE" id="PS51855">
    <property type="entry name" value="MGS"/>
    <property type="match status" value="1"/>
</dbReference>
<reference key="1">
    <citation type="journal article" date="2000" name="Nature">
        <title>The genome sequence of the food-borne pathogen Campylobacter jejuni reveals hypervariable sequences.</title>
        <authorList>
            <person name="Parkhill J."/>
            <person name="Wren B.W."/>
            <person name="Mungall K.L."/>
            <person name="Ketley J.M."/>
            <person name="Churcher C.M."/>
            <person name="Basham D."/>
            <person name="Chillingworth T."/>
            <person name="Davies R.M."/>
            <person name="Feltwell T."/>
            <person name="Holroyd S."/>
            <person name="Jagels K."/>
            <person name="Karlyshev A.V."/>
            <person name="Moule S."/>
            <person name="Pallen M.J."/>
            <person name="Penn C.W."/>
            <person name="Quail M.A."/>
            <person name="Rajandream M.A."/>
            <person name="Rutherford K.M."/>
            <person name="van Vliet A.H.M."/>
            <person name="Whitehead S."/>
            <person name="Barrell B.G."/>
        </authorList>
    </citation>
    <scope>NUCLEOTIDE SEQUENCE [LARGE SCALE GENOMIC DNA]</scope>
    <source>
        <strain>ATCC 700819 / NCTC 11168</strain>
    </source>
</reference>
<sequence length="510" mass="56402">MRALLSVSDKEGIVEFGKELENLGFEILSTGGTFKLLKENGIKVIEVSDFTKSPELFEGRVKTLHPKIHGGILHKRSDENHIKQAKENEILGIDLVCVNLYPFKKTTIMSDDFDEIIENIDIGGPAMIRSAAKNYKDVMVLCDPLDYEKVIETLKKGQNDENFRLNLMIKAYEHTANYDAYIANYMNERFNGGFGASKFIVGQKVFDTKYGENPHQKGALYEFDAFFSANFKALKGEASFNNLTDINAALNLASSFDKAPAIAIVKHGNPCGFAIKENLVQSYIHALKCDSVSAYGGVVAINGTLDEALANKINEIYVEVIIAANVDEKALAVFEGKKRIKIFTQESPFLIRSFDKYDFKHIDGGFVYQNSDEVGEDELKNAKLMSQREASKEELKDLEIAMKIAAFTKSNNVVYVKNGAMVAIGMGMTSRIDAAKAAIAKAKEMGLDLQGCVLASEAFFPFRDSIDEASKVGVKAIVEPGGSIRDDEVVKAADEYGMALYFTGVRHFLH</sequence>
<accession>Q9PNY2</accession>
<accession>Q0P9U6</accession>
<protein>
    <recommendedName>
        <fullName evidence="1">Bifunctional purine biosynthesis protein PurH</fullName>
    </recommendedName>
    <domain>
        <recommendedName>
            <fullName evidence="1">Phosphoribosylaminoimidazolecarboxamide formyltransferase</fullName>
            <ecNumber evidence="1">2.1.2.3</ecNumber>
        </recommendedName>
        <alternativeName>
            <fullName evidence="1">AICAR transformylase</fullName>
        </alternativeName>
    </domain>
    <domain>
        <recommendedName>
            <fullName evidence="1">IMP cyclohydrolase</fullName>
            <ecNumber evidence="1">3.5.4.10</ecNumber>
        </recommendedName>
        <alternativeName>
            <fullName evidence="1">ATIC</fullName>
        </alternativeName>
        <alternativeName>
            <fullName evidence="1">IMP synthase</fullName>
        </alternativeName>
        <alternativeName>
            <fullName evidence="1">Inosinicase</fullName>
        </alternativeName>
    </domain>
</protein>
<organism>
    <name type="scientific">Campylobacter jejuni subsp. jejuni serotype O:2 (strain ATCC 700819 / NCTC 11168)</name>
    <dbReference type="NCBI Taxonomy" id="192222"/>
    <lineage>
        <taxon>Bacteria</taxon>
        <taxon>Pseudomonadati</taxon>
        <taxon>Campylobacterota</taxon>
        <taxon>Epsilonproteobacteria</taxon>
        <taxon>Campylobacterales</taxon>
        <taxon>Campylobacteraceae</taxon>
        <taxon>Campylobacter</taxon>
    </lineage>
</organism>
<evidence type="ECO:0000255" key="1">
    <source>
        <dbReference type="HAMAP-Rule" id="MF_00139"/>
    </source>
</evidence>
<evidence type="ECO:0000255" key="2">
    <source>
        <dbReference type="PROSITE-ProRule" id="PRU01202"/>
    </source>
</evidence>
<evidence type="ECO:0007829" key="3">
    <source>
        <dbReference type="PDB" id="4EHI"/>
    </source>
</evidence>
<feature type="chain" id="PRO_0000192079" description="Bifunctional purine biosynthesis protein PurH">
    <location>
        <begin position="1"/>
        <end position="510"/>
    </location>
</feature>
<feature type="domain" description="MGS-like" evidence="2">
    <location>
        <begin position="1"/>
        <end position="142"/>
    </location>
</feature>
<feature type="strand" evidence="3">
    <location>
        <begin position="2"/>
        <end position="9"/>
    </location>
</feature>
<feature type="helix" evidence="3">
    <location>
        <begin position="13"/>
        <end position="22"/>
    </location>
</feature>
<feature type="strand" evidence="3">
    <location>
        <begin position="26"/>
        <end position="29"/>
    </location>
</feature>
<feature type="helix" evidence="3">
    <location>
        <begin position="31"/>
        <end position="39"/>
    </location>
</feature>
<feature type="strand" evidence="3">
    <location>
        <begin position="63"/>
        <end position="65"/>
    </location>
</feature>
<feature type="helix" evidence="3">
    <location>
        <begin position="78"/>
        <end position="83"/>
    </location>
</feature>
<feature type="strand" evidence="3">
    <location>
        <begin position="91"/>
        <end position="99"/>
    </location>
</feature>
<feature type="helix" evidence="3">
    <location>
        <begin position="103"/>
        <end position="109"/>
    </location>
</feature>
<feature type="helix" evidence="3">
    <location>
        <begin position="113"/>
        <end position="118"/>
    </location>
</feature>
<feature type="helix" evidence="3">
    <location>
        <begin position="124"/>
        <end position="133"/>
    </location>
</feature>
<feature type="turn" evidence="3">
    <location>
        <begin position="134"/>
        <end position="137"/>
    </location>
</feature>
<feature type="strand" evidence="3">
    <location>
        <begin position="139"/>
        <end position="141"/>
    </location>
</feature>
<feature type="helix" evidence="3">
    <location>
        <begin position="144"/>
        <end position="146"/>
    </location>
</feature>
<feature type="helix" evidence="3">
    <location>
        <begin position="147"/>
        <end position="155"/>
    </location>
</feature>
<feature type="helix" evidence="3">
    <location>
        <begin position="161"/>
        <end position="190"/>
    </location>
</feature>
<feature type="strand" evidence="3">
    <location>
        <begin position="196"/>
        <end position="209"/>
    </location>
</feature>
<feature type="strand" evidence="3">
    <location>
        <begin position="211"/>
        <end position="213"/>
    </location>
</feature>
<feature type="strand" evidence="3">
    <location>
        <begin position="218"/>
        <end position="225"/>
    </location>
</feature>
<feature type="helix" evidence="3">
    <location>
        <begin position="226"/>
        <end position="230"/>
    </location>
</feature>
<feature type="strand" evidence="3">
    <location>
        <begin position="232"/>
        <end position="236"/>
    </location>
</feature>
<feature type="helix" evidence="3">
    <location>
        <begin position="240"/>
        <end position="253"/>
    </location>
</feature>
<feature type="strand" evidence="3">
    <location>
        <begin position="261"/>
        <end position="266"/>
    </location>
</feature>
<feature type="strand" evidence="3">
    <location>
        <begin position="269"/>
        <end position="275"/>
    </location>
</feature>
<feature type="helix" evidence="3">
    <location>
        <begin position="279"/>
        <end position="287"/>
    </location>
</feature>
<feature type="helix" evidence="3">
    <location>
        <begin position="291"/>
        <end position="294"/>
    </location>
</feature>
<feature type="strand" evidence="3">
    <location>
        <begin position="298"/>
        <end position="305"/>
    </location>
</feature>
<feature type="helix" evidence="3">
    <location>
        <begin position="307"/>
        <end position="313"/>
    </location>
</feature>
<feature type="strand" evidence="3">
    <location>
        <begin position="319"/>
        <end position="326"/>
    </location>
</feature>
<feature type="helix" evidence="3">
    <location>
        <begin position="328"/>
        <end position="332"/>
    </location>
</feature>
<feature type="strand" evidence="3">
    <location>
        <begin position="341"/>
        <end position="344"/>
    </location>
</feature>
<feature type="strand" evidence="3">
    <location>
        <begin position="346"/>
        <end position="349"/>
    </location>
</feature>
<feature type="strand" evidence="3">
    <location>
        <begin position="356"/>
        <end position="362"/>
    </location>
</feature>
<feature type="strand" evidence="3">
    <location>
        <begin position="365"/>
        <end position="370"/>
    </location>
</feature>
<feature type="turn" evidence="3">
    <location>
        <begin position="376"/>
        <end position="381"/>
    </location>
</feature>
<feature type="strand" evidence="3">
    <location>
        <begin position="382"/>
        <end position="384"/>
    </location>
</feature>
<feature type="strand" evidence="3">
    <location>
        <begin position="386"/>
        <end position="388"/>
    </location>
</feature>
<feature type="helix" evidence="3">
    <location>
        <begin position="392"/>
        <end position="407"/>
    </location>
</feature>
<feature type="strand" evidence="3">
    <location>
        <begin position="413"/>
        <end position="417"/>
    </location>
</feature>
<feature type="strand" evidence="3">
    <location>
        <begin position="420"/>
        <end position="425"/>
    </location>
</feature>
<feature type="strand" evidence="3">
    <location>
        <begin position="427"/>
        <end position="429"/>
    </location>
</feature>
<feature type="helix" evidence="3">
    <location>
        <begin position="431"/>
        <end position="444"/>
    </location>
</feature>
<feature type="strand" evidence="3">
    <location>
        <begin position="453"/>
        <end position="455"/>
    </location>
</feature>
<feature type="helix" evidence="3">
    <location>
        <begin position="464"/>
        <end position="471"/>
    </location>
</feature>
<feature type="strand" evidence="3">
    <location>
        <begin position="476"/>
        <end position="479"/>
    </location>
</feature>
<feature type="helix" evidence="3">
    <location>
        <begin position="486"/>
        <end position="496"/>
    </location>
</feature>
<feature type="strand" evidence="3">
    <location>
        <begin position="499"/>
        <end position="502"/>
    </location>
</feature>
<proteinExistence type="evidence at protein level"/>